<dbReference type="EC" id="3.1.3.43" evidence="1"/>
<dbReference type="EMBL" id="AC138617">
    <property type="status" value="NOT_ANNOTATED_CDS"/>
    <property type="molecule type" value="Genomic_DNA"/>
</dbReference>
<dbReference type="EMBL" id="BC094946">
    <property type="protein sequence ID" value="AAH94946.1"/>
    <property type="molecule type" value="mRNA"/>
</dbReference>
<dbReference type="CCDS" id="CCDS22582.1"/>
<dbReference type="RefSeq" id="NP_001019777.1">
    <property type="nucleotide sequence ID" value="NM_001024606.2"/>
</dbReference>
<dbReference type="RefSeq" id="XP_006531223.1">
    <property type="nucleotide sequence ID" value="XM_006531160.4"/>
</dbReference>
<dbReference type="SMR" id="Q504M2"/>
<dbReference type="FunCoup" id="Q504M2">
    <property type="interactions" value="2280"/>
</dbReference>
<dbReference type="STRING" id="10090.ENSMUSP00000092821"/>
<dbReference type="PhosphoSitePlus" id="Q504M2"/>
<dbReference type="PaxDb" id="10090-ENSMUSP00000092821"/>
<dbReference type="PeptideAtlas" id="Q504M2"/>
<dbReference type="ProteomicsDB" id="337357"/>
<dbReference type="Antibodypedia" id="15590">
    <property type="antibodies" value="143 antibodies from 25 providers"/>
</dbReference>
<dbReference type="DNASU" id="382051"/>
<dbReference type="Ensembl" id="ENSMUST00000059588.8">
    <property type="protein sequence ID" value="ENSMUSP00000092821.4"/>
    <property type="gene ID" value="ENSMUSG00000048371.9"/>
</dbReference>
<dbReference type="GeneID" id="382051"/>
<dbReference type="KEGG" id="mmu:382051"/>
<dbReference type="UCSC" id="uc009naw.1">
    <property type="organism name" value="mouse"/>
</dbReference>
<dbReference type="AGR" id="MGI:1918878"/>
<dbReference type="CTD" id="57546"/>
<dbReference type="MGI" id="MGI:1918878">
    <property type="gene designation" value="Pdp2"/>
</dbReference>
<dbReference type="VEuPathDB" id="HostDB:ENSMUSG00000048371"/>
<dbReference type="eggNOG" id="KOG0700">
    <property type="taxonomic scope" value="Eukaryota"/>
</dbReference>
<dbReference type="GeneTree" id="ENSGT00940000160687"/>
<dbReference type="HOGENOM" id="CLU_021928_0_0_1"/>
<dbReference type="OMA" id="DHNAWNP"/>
<dbReference type="OrthoDB" id="420076at2759"/>
<dbReference type="TreeFam" id="TF313505"/>
<dbReference type="Reactome" id="R-MMU-204174">
    <property type="pathway name" value="Regulation of pyruvate dehydrogenase (PDH) complex"/>
</dbReference>
<dbReference type="BioGRID-ORCS" id="382051">
    <property type="hits" value="3 hits in 78 CRISPR screens"/>
</dbReference>
<dbReference type="ChiTaRS" id="Pdp2">
    <property type="organism name" value="mouse"/>
</dbReference>
<dbReference type="Proteomes" id="UP000000589">
    <property type="component" value="Chromosome 8"/>
</dbReference>
<dbReference type="RNAct" id="Q504M2">
    <property type="molecule type" value="protein"/>
</dbReference>
<dbReference type="Bgee" id="ENSMUSG00000048371">
    <property type="expression patterns" value="Expressed in cleaving embryo and 171 other cell types or tissues"/>
</dbReference>
<dbReference type="GO" id="GO:0005739">
    <property type="term" value="C:mitochondrion"/>
    <property type="evidence" value="ECO:0007005"/>
    <property type="project" value="MGI"/>
</dbReference>
<dbReference type="GO" id="GO:0004741">
    <property type="term" value="F:[pyruvate dehydrogenase (acetyl-transferring)]-phosphatase activity"/>
    <property type="evidence" value="ECO:0000250"/>
    <property type="project" value="UniProtKB"/>
</dbReference>
<dbReference type="GO" id="GO:0046872">
    <property type="term" value="F:metal ion binding"/>
    <property type="evidence" value="ECO:0007669"/>
    <property type="project" value="UniProtKB-KW"/>
</dbReference>
<dbReference type="GO" id="GO:0042093">
    <property type="term" value="P:T-helper cell differentiation"/>
    <property type="evidence" value="ECO:0000315"/>
    <property type="project" value="UniProtKB"/>
</dbReference>
<dbReference type="CDD" id="cd00143">
    <property type="entry name" value="PP2Cc"/>
    <property type="match status" value="1"/>
</dbReference>
<dbReference type="FunFam" id="3.60.40.10:FF:000006">
    <property type="entry name" value="Pyruvate dehyrogenase phosphatase catalytic subunit 1"/>
    <property type="match status" value="1"/>
</dbReference>
<dbReference type="Gene3D" id="3.60.40.10">
    <property type="entry name" value="PPM-type phosphatase domain"/>
    <property type="match status" value="1"/>
</dbReference>
<dbReference type="InterPro" id="IPR015655">
    <property type="entry name" value="PP2C"/>
</dbReference>
<dbReference type="InterPro" id="IPR000222">
    <property type="entry name" value="PP2C_BS"/>
</dbReference>
<dbReference type="InterPro" id="IPR036457">
    <property type="entry name" value="PPM-type-like_dom_sf"/>
</dbReference>
<dbReference type="InterPro" id="IPR001932">
    <property type="entry name" value="PPM-type_phosphatase-like_dom"/>
</dbReference>
<dbReference type="PANTHER" id="PTHR13832:SF343">
    <property type="entry name" value="[PYRUVATE DEHYDROGENASE [ACETYL-TRANSFERRING]]-PHOSPHATASE 2, MITOCHONDRIAL"/>
    <property type="match status" value="1"/>
</dbReference>
<dbReference type="PANTHER" id="PTHR13832">
    <property type="entry name" value="PROTEIN PHOSPHATASE 2C"/>
    <property type="match status" value="1"/>
</dbReference>
<dbReference type="Pfam" id="PF00481">
    <property type="entry name" value="PP2C"/>
    <property type="match status" value="1"/>
</dbReference>
<dbReference type="SMART" id="SM00332">
    <property type="entry name" value="PP2Cc"/>
    <property type="match status" value="1"/>
</dbReference>
<dbReference type="SUPFAM" id="SSF81606">
    <property type="entry name" value="PP2C-like"/>
    <property type="match status" value="1"/>
</dbReference>
<dbReference type="PROSITE" id="PS01032">
    <property type="entry name" value="PPM_1"/>
    <property type="match status" value="1"/>
</dbReference>
<dbReference type="PROSITE" id="PS51746">
    <property type="entry name" value="PPM_2"/>
    <property type="match status" value="1"/>
</dbReference>
<sequence length="532" mass="59947">MSSTVSYWIFNSARNRIALLRGGRRLYSRAATSRNLLKWRPFSPALASSALKCGSPPGGFALRKAYRHTSTEEEDFHLQLSPEQVSDLLRAGESSHKVLDFNNGVPNSVLRFESNQLAANSPVEDRQGVATCVQTNGMMFGIFDGHGGHACAQAVSERLFYYMAVSLMSHQTLEQMEEATENMKPLLPILRWLKHPGDSIYKDVTSVHLDHLRVYWQELLDLHMEMGLSIEEALMYSFQRLDSDISLEIQAPLEDEVTRNLSLQVAFSGATACMAHVNGVHLHVANAGDCRAILGVQEENGAWSCLPLTCDHNAWNEAELSRLKREHPESEDRTLIIDDRLLGVLMPCRAFGDVQLKWSKELQRNVLARGFDTEALNIYQFTPPHYYTPPYLTAKPEVTYHRLRRQDKFLVLASDGLWDMLGNEDVVRLVVGHLSKVGRHKPDLDQRPANLGLMQSLLLQRKASGLHAADQNTATHLIRHAIGSNEYGEMEPERLAAMLTLPEDVARMYRDDITVMVVFFNSDSIDTYCKEG</sequence>
<comment type="function">
    <text evidence="1 5">Mitochondrial enzyme that catalyzes the dephosphorylation and concomitant reactivation of the alpha subunit of the E1 component of the pyruvate dehydrogenase complex (PDC), thereby stimulating the conversion of pyruvate into acetyl-CoA (By similarity). Acts as a crucial regulator of T cell metabolism and function, with a particular focus on T-helper Th17 (PubMed:30150402).</text>
</comment>
<comment type="catalytic activity">
    <reaction evidence="1">
        <text>O-phospho-L-seryl-[pyruvate dehydrogenase E1 alpha subunit] + H2O = L-seryl-[pyruvate dehydrogenase E1 alpha subunit] + phosphate</text>
        <dbReference type="Rhea" id="RHEA:12669"/>
        <dbReference type="Rhea" id="RHEA-COMP:13689"/>
        <dbReference type="Rhea" id="RHEA-COMP:13690"/>
        <dbReference type="ChEBI" id="CHEBI:15377"/>
        <dbReference type="ChEBI" id="CHEBI:29999"/>
        <dbReference type="ChEBI" id="CHEBI:43474"/>
        <dbReference type="ChEBI" id="CHEBI:83421"/>
        <dbReference type="EC" id="3.1.3.43"/>
    </reaction>
    <physiologicalReaction direction="left-to-right" evidence="1">
        <dbReference type="Rhea" id="RHEA:12670"/>
    </physiologicalReaction>
</comment>
<comment type="cofactor">
    <cofactor evidence="1">
        <name>Mg(2+)</name>
        <dbReference type="ChEBI" id="CHEBI:18420"/>
    </cofactor>
    <text evidence="2">Binds 2 magnesium ions per subunit.</text>
</comment>
<comment type="subcellular location">
    <subcellularLocation>
        <location evidence="1">Mitochondrion</location>
    </subcellularLocation>
</comment>
<comment type="similarity">
    <text evidence="6">Belongs to the PP2C family.</text>
</comment>
<keyword id="KW-0378">Hydrolase</keyword>
<keyword id="KW-0460">Magnesium</keyword>
<keyword id="KW-0464">Manganese</keyword>
<keyword id="KW-0479">Metal-binding</keyword>
<keyword id="KW-0496">Mitochondrion</keyword>
<keyword id="KW-0904">Protein phosphatase</keyword>
<keyword id="KW-1185">Reference proteome</keyword>
<keyword id="KW-0809">Transit peptide</keyword>
<protein>
    <recommendedName>
        <fullName>[Pyruvate dehydrogenase [acetyl-transferring]]-phosphatase 2, mitochondrial</fullName>
        <shortName>PDP 2</shortName>
        <ecNumber evidence="1">3.1.3.43</ecNumber>
    </recommendedName>
    <alternativeName>
        <fullName>Pyruvate dehydrogenase phosphatase catalytic subunit 2</fullName>
        <shortName>PDPC 2</shortName>
    </alternativeName>
</protein>
<accession>Q504M2</accession>
<reference key="1">
    <citation type="journal article" date="2009" name="PLoS Biol.">
        <title>Lineage-specific biology revealed by a finished genome assembly of the mouse.</title>
        <authorList>
            <person name="Church D.M."/>
            <person name="Goodstadt L."/>
            <person name="Hillier L.W."/>
            <person name="Zody M.C."/>
            <person name="Goldstein S."/>
            <person name="She X."/>
            <person name="Bult C.J."/>
            <person name="Agarwala R."/>
            <person name="Cherry J.L."/>
            <person name="DiCuccio M."/>
            <person name="Hlavina W."/>
            <person name="Kapustin Y."/>
            <person name="Meric P."/>
            <person name="Maglott D."/>
            <person name="Birtle Z."/>
            <person name="Marques A.C."/>
            <person name="Graves T."/>
            <person name="Zhou S."/>
            <person name="Teague B."/>
            <person name="Potamousis K."/>
            <person name="Churas C."/>
            <person name="Place M."/>
            <person name="Herschleb J."/>
            <person name="Runnheim R."/>
            <person name="Forrest D."/>
            <person name="Amos-Landgraf J."/>
            <person name="Schwartz D.C."/>
            <person name="Cheng Z."/>
            <person name="Lindblad-Toh K."/>
            <person name="Eichler E.E."/>
            <person name="Ponting C.P."/>
        </authorList>
    </citation>
    <scope>NUCLEOTIDE SEQUENCE [LARGE SCALE GENOMIC DNA]</scope>
    <source>
        <strain>C57BL/6J</strain>
    </source>
</reference>
<reference key="2">
    <citation type="journal article" date="2004" name="Genome Res.">
        <title>The status, quality, and expansion of the NIH full-length cDNA project: the Mammalian Gene Collection (MGC).</title>
        <authorList>
            <consortium name="The MGC Project Team"/>
        </authorList>
    </citation>
    <scope>NUCLEOTIDE SEQUENCE [LARGE SCALE MRNA]</scope>
    <source>
        <tissue>Kidney</tissue>
    </source>
</reference>
<reference key="3">
    <citation type="journal article" date="2010" name="Cell">
        <title>A tissue-specific atlas of mouse protein phosphorylation and expression.</title>
        <authorList>
            <person name="Huttlin E.L."/>
            <person name="Jedrychowski M.P."/>
            <person name="Elias J.E."/>
            <person name="Goswami T."/>
            <person name="Rad R."/>
            <person name="Beausoleil S.A."/>
            <person name="Villen J."/>
            <person name="Haas W."/>
            <person name="Sowa M.E."/>
            <person name="Gygi S.P."/>
        </authorList>
    </citation>
    <scope>IDENTIFICATION BY MASS SPECTROMETRY [LARGE SCALE ANALYSIS]</scope>
</reference>
<reference key="4">
    <citation type="journal article" date="2018" name="Proc. Natl. Acad. Sci. U.S.A.">
        <title>Pyruvate dehydrogenase phosphatase catalytic subunit 2 limits Th17 differentiation.</title>
        <authorList>
            <person name="Kono M."/>
            <person name="Yoshida N."/>
            <person name="Maeda K."/>
            <person name="Skinner N.E."/>
            <person name="Pan W."/>
            <person name="Kyttaris V.C."/>
            <person name="Tsokos M.G."/>
            <person name="Tsokos G.C."/>
        </authorList>
    </citation>
    <scope>FUNCTION</scope>
</reference>
<gene>
    <name type="primary">Pdp2</name>
</gene>
<name>PDP2_MOUSE</name>
<evidence type="ECO:0000250" key="1">
    <source>
        <dbReference type="UniProtKB" id="O88484"/>
    </source>
</evidence>
<evidence type="ECO:0000250" key="2">
    <source>
        <dbReference type="UniProtKB" id="P35816"/>
    </source>
</evidence>
<evidence type="ECO:0000255" key="3"/>
<evidence type="ECO:0000255" key="4">
    <source>
        <dbReference type="PROSITE-ProRule" id="PRU01082"/>
    </source>
</evidence>
<evidence type="ECO:0000269" key="5">
    <source>
    </source>
</evidence>
<evidence type="ECO:0000305" key="6"/>
<proteinExistence type="evidence at protein level"/>
<organism>
    <name type="scientific">Mus musculus</name>
    <name type="common">Mouse</name>
    <dbReference type="NCBI Taxonomy" id="10090"/>
    <lineage>
        <taxon>Eukaryota</taxon>
        <taxon>Metazoa</taxon>
        <taxon>Chordata</taxon>
        <taxon>Craniata</taxon>
        <taxon>Vertebrata</taxon>
        <taxon>Euteleostomi</taxon>
        <taxon>Mammalia</taxon>
        <taxon>Eutheria</taxon>
        <taxon>Euarchontoglires</taxon>
        <taxon>Glires</taxon>
        <taxon>Rodentia</taxon>
        <taxon>Myomorpha</taxon>
        <taxon>Muroidea</taxon>
        <taxon>Muridae</taxon>
        <taxon>Murinae</taxon>
        <taxon>Mus</taxon>
        <taxon>Mus</taxon>
    </lineage>
</organism>
<feature type="transit peptide" description="Mitochondrion" evidence="3">
    <location>
        <begin position="1"/>
        <end position="69"/>
    </location>
</feature>
<feature type="chain" id="PRO_0000459652" description="[Pyruvate dehydrogenase [acetyl-transferring]]-phosphatase 2, mitochondrial">
    <location>
        <begin position="70"/>
        <end position="532"/>
    </location>
</feature>
<feature type="domain" description="PPM-type phosphatase" evidence="4">
    <location>
        <begin position="107"/>
        <end position="518"/>
    </location>
</feature>
<feature type="binding site" evidence="2">
    <location>
        <position position="144"/>
    </location>
    <ligand>
        <name>Mn(2+)</name>
        <dbReference type="ChEBI" id="CHEBI:29035"/>
        <label>1</label>
    </ligand>
</feature>
<feature type="binding site" evidence="2">
    <location>
        <position position="144"/>
    </location>
    <ligand>
        <name>Mn(2+)</name>
        <dbReference type="ChEBI" id="CHEBI:29035"/>
        <label>2</label>
    </ligand>
</feature>
<feature type="binding site" evidence="2">
    <location>
        <position position="145"/>
    </location>
    <ligand>
        <name>Mn(2+)</name>
        <dbReference type="ChEBI" id="CHEBI:29035"/>
        <label>1</label>
    </ligand>
</feature>
<feature type="binding site" evidence="2">
    <location>
        <position position="415"/>
    </location>
    <ligand>
        <name>Mn(2+)</name>
        <dbReference type="ChEBI" id="CHEBI:29035"/>
        <label>2</label>
    </ligand>
</feature>
<feature type="binding site" evidence="2">
    <location>
        <position position="511"/>
    </location>
    <ligand>
        <name>Mn(2+)</name>
        <dbReference type="ChEBI" id="CHEBI:29035"/>
        <label>2</label>
    </ligand>
</feature>